<dbReference type="EC" id="1.11.1.26" evidence="1"/>
<dbReference type="EMBL" id="AE016826">
    <property type="protein sequence ID" value="AAO26904.1"/>
    <property type="molecule type" value="Genomic_DNA"/>
</dbReference>
<dbReference type="RefSeq" id="WP_011091305.1">
    <property type="nucleotide sequence ID" value="NC_004545.1"/>
</dbReference>
<dbReference type="SMR" id="Q89AS1"/>
<dbReference type="STRING" id="224915.bbp_171"/>
<dbReference type="KEGG" id="bab:bbp_171"/>
<dbReference type="eggNOG" id="COG0450">
    <property type="taxonomic scope" value="Bacteria"/>
</dbReference>
<dbReference type="HOGENOM" id="CLU_042529_21_1_6"/>
<dbReference type="OrthoDB" id="9812811at2"/>
<dbReference type="Proteomes" id="UP000000601">
    <property type="component" value="Chromosome"/>
</dbReference>
<dbReference type="GO" id="GO:0005829">
    <property type="term" value="C:cytosol"/>
    <property type="evidence" value="ECO:0007669"/>
    <property type="project" value="TreeGrafter"/>
</dbReference>
<dbReference type="GO" id="GO:0102039">
    <property type="term" value="F:NADH-dependent peroxiredoxin activity"/>
    <property type="evidence" value="ECO:0007669"/>
    <property type="project" value="UniProtKB-EC"/>
</dbReference>
<dbReference type="GO" id="GO:0008379">
    <property type="term" value="F:thioredoxin peroxidase activity"/>
    <property type="evidence" value="ECO:0007669"/>
    <property type="project" value="TreeGrafter"/>
</dbReference>
<dbReference type="GO" id="GO:0045454">
    <property type="term" value="P:cell redox homeostasis"/>
    <property type="evidence" value="ECO:0007669"/>
    <property type="project" value="TreeGrafter"/>
</dbReference>
<dbReference type="GO" id="GO:0033554">
    <property type="term" value="P:cellular response to stress"/>
    <property type="evidence" value="ECO:0007669"/>
    <property type="project" value="TreeGrafter"/>
</dbReference>
<dbReference type="GO" id="GO:0042744">
    <property type="term" value="P:hydrogen peroxide catabolic process"/>
    <property type="evidence" value="ECO:0007669"/>
    <property type="project" value="TreeGrafter"/>
</dbReference>
<dbReference type="GO" id="GO:0006979">
    <property type="term" value="P:response to oxidative stress"/>
    <property type="evidence" value="ECO:0007669"/>
    <property type="project" value="TreeGrafter"/>
</dbReference>
<dbReference type="CDD" id="cd03015">
    <property type="entry name" value="PRX_Typ2cys"/>
    <property type="match status" value="1"/>
</dbReference>
<dbReference type="FunFam" id="3.40.30.10:FF:000002">
    <property type="entry name" value="Alkyl hydroperoxide reductase C"/>
    <property type="match status" value="1"/>
</dbReference>
<dbReference type="Gene3D" id="3.40.30.10">
    <property type="entry name" value="Glutaredoxin"/>
    <property type="match status" value="1"/>
</dbReference>
<dbReference type="InterPro" id="IPR000866">
    <property type="entry name" value="AhpC/TSA"/>
</dbReference>
<dbReference type="InterPro" id="IPR050217">
    <property type="entry name" value="Peroxiredoxin"/>
</dbReference>
<dbReference type="InterPro" id="IPR024706">
    <property type="entry name" value="Peroxiredoxin_AhpC-typ"/>
</dbReference>
<dbReference type="InterPro" id="IPR019479">
    <property type="entry name" value="Peroxiredoxin_C"/>
</dbReference>
<dbReference type="InterPro" id="IPR036249">
    <property type="entry name" value="Thioredoxin-like_sf"/>
</dbReference>
<dbReference type="InterPro" id="IPR013766">
    <property type="entry name" value="Thioredoxin_domain"/>
</dbReference>
<dbReference type="PANTHER" id="PTHR10681">
    <property type="entry name" value="THIOREDOXIN PEROXIDASE"/>
    <property type="match status" value="1"/>
</dbReference>
<dbReference type="PANTHER" id="PTHR10681:SF128">
    <property type="entry name" value="THIOREDOXIN-DEPENDENT PEROXIDE REDUCTASE, MITOCHONDRIAL"/>
    <property type="match status" value="1"/>
</dbReference>
<dbReference type="Pfam" id="PF10417">
    <property type="entry name" value="1-cysPrx_C"/>
    <property type="match status" value="1"/>
</dbReference>
<dbReference type="Pfam" id="PF00578">
    <property type="entry name" value="AhpC-TSA"/>
    <property type="match status" value="1"/>
</dbReference>
<dbReference type="PIRSF" id="PIRSF000239">
    <property type="entry name" value="AHPC"/>
    <property type="match status" value="1"/>
</dbReference>
<dbReference type="SUPFAM" id="SSF52833">
    <property type="entry name" value="Thioredoxin-like"/>
    <property type="match status" value="1"/>
</dbReference>
<dbReference type="PROSITE" id="PS51352">
    <property type="entry name" value="THIOREDOXIN_2"/>
    <property type="match status" value="1"/>
</dbReference>
<keyword id="KW-0049">Antioxidant</keyword>
<keyword id="KW-0963">Cytoplasm</keyword>
<keyword id="KW-1015">Disulfide bond</keyword>
<keyword id="KW-0560">Oxidoreductase</keyword>
<keyword id="KW-0575">Peroxidase</keyword>
<keyword id="KW-0676">Redox-active center</keyword>
<keyword id="KW-1185">Reference proteome</keyword>
<feature type="chain" id="PRO_0000135143" description="Alkyl hydroperoxide reductase C">
    <location>
        <begin position="1"/>
        <end position="199"/>
    </location>
</feature>
<feature type="domain" description="Thioredoxin" evidence="4">
    <location>
        <begin position="2"/>
        <end position="163"/>
    </location>
</feature>
<feature type="active site" description="Cysteine sulfenic acid (-SOH) intermediate" evidence="1">
    <location>
        <position position="50"/>
    </location>
</feature>
<feature type="disulfide bond" description="Interchain (with C-171); in linked form" evidence="1">
    <location>
        <position position="50"/>
    </location>
</feature>
<feature type="disulfide bond" description="Interchain (with C-50); in linked form" evidence="1">
    <location>
        <position position="171"/>
    </location>
</feature>
<evidence type="ECO:0000250" key="1">
    <source>
        <dbReference type="UniProtKB" id="P0A251"/>
    </source>
</evidence>
<evidence type="ECO:0000250" key="2">
    <source>
        <dbReference type="UniProtKB" id="P0AE08"/>
    </source>
</evidence>
<evidence type="ECO:0000250" key="3">
    <source>
        <dbReference type="UniProtKB" id="P56876"/>
    </source>
</evidence>
<evidence type="ECO:0000255" key="4">
    <source>
        <dbReference type="PROSITE-ProRule" id="PRU00691"/>
    </source>
</evidence>
<evidence type="ECO:0000305" key="5"/>
<name>AHPC_BUCBP</name>
<reference key="1">
    <citation type="journal article" date="2003" name="Proc. Natl. Acad. Sci. U.S.A.">
        <title>Reductive genome evolution in Buchnera aphidicola.</title>
        <authorList>
            <person name="van Ham R.C.H.J."/>
            <person name="Kamerbeek J."/>
            <person name="Palacios C."/>
            <person name="Rausell C."/>
            <person name="Abascal F."/>
            <person name="Bastolla U."/>
            <person name="Fernandez J.M."/>
            <person name="Jimenez L."/>
            <person name="Postigo M."/>
            <person name="Silva F.J."/>
            <person name="Tamames J."/>
            <person name="Viguera E."/>
            <person name="Latorre A."/>
            <person name="Valencia A."/>
            <person name="Moran F."/>
            <person name="Moya A."/>
        </authorList>
    </citation>
    <scope>NUCLEOTIDE SEQUENCE [LARGE SCALE GENOMIC DNA]</scope>
    <source>
        <strain>Bp</strain>
    </source>
</reference>
<gene>
    <name type="ordered locus">bbp_171</name>
</gene>
<organism>
    <name type="scientific">Buchnera aphidicola subsp. Baizongia pistaciae (strain Bp)</name>
    <dbReference type="NCBI Taxonomy" id="224915"/>
    <lineage>
        <taxon>Bacteria</taxon>
        <taxon>Pseudomonadati</taxon>
        <taxon>Pseudomonadota</taxon>
        <taxon>Gammaproteobacteria</taxon>
        <taxon>Enterobacterales</taxon>
        <taxon>Erwiniaceae</taxon>
        <taxon>Buchnera</taxon>
    </lineage>
</organism>
<proteinExistence type="inferred from homology"/>
<accession>Q89AS1</accession>
<protein>
    <recommendedName>
        <fullName>Alkyl hydroperoxide reductase C</fullName>
        <ecNumber evidence="1">1.11.1.26</ecNumber>
    </recommendedName>
    <alternativeName>
        <fullName>Peroxiredoxin</fullName>
    </alternativeName>
    <alternativeName>
        <fullName>Thioredoxin peroxidase</fullName>
    </alternativeName>
</protein>
<sequence length="199" mass="23005">MVLVTYPAPDFTASAISCNGDIINNFNFKEFTNNQTSILFFWPMDFTFVCPSEIIAFNQELSKFKKRNVKLIGVSIDSVYVHHAWRNTLSHNGQIDKINFTMVSDLKREIQRSYGIEHPQLGVALRATFLIDKNRIIRHQTINDLPFGRNISETLRMIDALHFYEKYGEVCPANWKKGDTGIKTTQEGIHKYLEKISKK</sequence>
<comment type="function">
    <text evidence="1">Thiol-specific peroxidase that catalyzes the reduction of hydrogen peroxide and organic hydroperoxides to water and alcohols, respectively. Plays a role in cell protection against oxidative stress by detoxifying peroxides.</text>
</comment>
<comment type="catalytic activity">
    <reaction evidence="1">
        <text>a hydroperoxide + NADH + H(+) = an alcohol + NAD(+) + H2O</text>
        <dbReference type="Rhea" id="RHEA:62628"/>
        <dbReference type="ChEBI" id="CHEBI:15377"/>
        <dbReference type="ChEBI" id="CHEBI:15378"/>
        <dbReference type="ChEBI" id="CHEBI:30879"/>
        <dbReference type="ChEBI" id="CHEBI:35924"/>
        <dbReference type="ChEBI" id="CHEBI:57540"/>
        <dbReference type="ChEBI" id="CHEBI:57945"/>
        <dbReference type="EC" id="1.11.1.26"/>
    </reaction>
</comment>
<comment type="subunit">
    <text evidence="1">Homodimer; disulfide-linked, upon oxidation. 5 homodimers assemble to form a ring-like decamer.</text>
</comment>
<comment type="subcellular location">
    <subcellularLocation>
        <location evidence="2">Cytoplasm</location>
    </subcellularLocation>
</comment>
<comment type="miscellaneous">
    <text evidence="3">The active site is a conserved redox-active cysteine residue, the peroxidatic cysteine (C(P)), which makes the nucleophilic attack on the peroxide substrate. The peroxide oxidizes the C(P)-SH to cysteine sulfenic acid (C(P)-SOH), which then reacts with another cysteine residue, the resolving cysteine (C(R)), to form a disulfide bridge. The disulfide is subsequently reduced by an appropriate electron donor to complete the catalytic cycle. In this typical 2-Cys peroxiredoxin, C(R) is provided by the other dimeric subunit to form an intersubunit disulfide. The disulfide is subsequently reduced by thioredoxin.</text>
</comment>
<comment type="similarity">
    <text evidence="5">Belongs to the peroxiredoxin family. AhpC/Prx1 subfamily.</text>
</comment>